<sequence length="172" mass="19047">MVDKRESYTKEDLLASGRGELFGAKGPQLPAPNMLMMDRVVKMTETGGNFDKGYVEAELDINPDLWFFGCHFIGDPVMPGCLGLDAMWQLVGFYLGWLGGEGKGRALGVGEVKFTGQVLPTARKVTYRIHFKRIVNRRLIMGLADGEVLVDGRLIYTAHDLKVGLFQDTSAF</sequence>
<name>FABA_SALHS</name>
<dbReference type="EC" id="4.2.1.59" evidence="1"/>
<dbReference type="EC" id="5.3.3.14" evidence="1"/>
<dbReference type="EMBL" id="CP001120">
    <property type="protein sequence ID" value="ACF66721.1"/>
    <property type="molecule type" value="Genomic_DNA"/>
</dbReference>
<dbReference type="RefSeq" id="WP_000227928.1">
    <property type="nucleotide sequence ID" value="NC_011083.1"/>
</dbReference>
<dbReference type="SMR" id="B4TDZ4"/>
<dbReference type="KEGG" id="seh:SeHA_C1176"/>
<dbReference type="HOGENOM" id="CLU_097925_0_0_6"/>
<dbReference type="UniPathway" id="UPA00094"/>
<dbReference type="Proteomes" id="UP000001866">
    <property type="component" value="Chromosome"/>
</dbReference>
<dbReference type="GO" id="GO:0005737">
    <property type="term" value="C:cytoplasm"/>
    <property type="evidence" value="ECO:0007669"/>
    <property type="project" value="UniProtKB-SubCell"/>
</dbReference>
<dbReference type="GO" id="GO:0019171">
    <property type="term" value="F:(3R)-hydroxyacyl-[acyl-carrier-protein] dehydratase activity"/>
    <property type="evidence" value="ECO:0007669"/>
    <property type="project" value="UniProtKB-UniRule"/>
</dbReference>
<dbReference type="GO" id="GO:0034017">
    <property type="term" value="F:trans-2-decenoyl-acyl-carrier-protein isomerase activity"/>
    <property type="evidence" value="ECO:0007669"/>
    <property type="project" value="UniProtKB-UniRule"/>
</dbReference>
<dbReference type="GO" id="GO:0006636">
    <property type="term" value="P:unsaturated fatty acid biosynthetic process"/>
    <property type="evidence" value="ECO:0007669"/>
    <property type="project" value="UniProtKB-UniRule"/>
</dbReference>
<dbReference type="CDD" id="cd01287">
    <property type="entry name" value="FabA"/>
    <property type="match status" value="1"/>
</dbReference>
<dbReference type="FunFam" id="3.10.129.10:FF:000003">
    <property type="entry name" value="3-hydroxydecanoyl-[acyl-carrier-protein] dehydratase"/>
    <property type="match status" value="1"/>
</dbReference>
<dbReference type="Gene3D" id="3.10.129.10">
    <property type="entry name" value="Hotdog Thioesterase"/>
    <property type="match status" value="1"/>
</dbReference>
<dbReference type="HAMAP" id="MF_00405">
    <property type="entry name" value="FabA"/>
    <property type="match status" value="1"/>
</dbReference>
<dbReference type="InterPro" id="IPR010083">
    <property type="entry name" value="FabA"/>
</dbReference>
<dbReference type="InterPro" id="IPR013114">
    <property type="entry name" value="FabA_FabZ"/>
</dbReference>
<dbReference type="InterPro" id="IPR029069">
    <property type="entry name" value="HotDog_dom_sf"/>
</dbReference>
<dbReference type="NCBIfam" id="TIGR01749">
    <property type="entry name" value="fabA"/>
    <property type="match status" value="1"/>
</dbReference>
<dbReference type="NCBIfam" id="NF003509">
    <property type="entry name" value="PRK05174.1"/>
    <property type="match status" value="1"/>
</dbReference>
<dbReference type="PANTHER" id="PTHR30272">
    <property type="entry name" value="3-HYDROXYACYL-[ACYL-CARRIER-PROTEIN] DEHYDRATASE"/>
    <property type="match status" value="1"/>
</dbReference>
<dbReference type="PANTHER" id="PTHR30272:SF8">
    <property type="entry name" value="3-HYDROXYDECANOYL-[ACYL-CARRIER-PROTEIN] DEHYDRATASE"/>
    <property type="match status" value="1"/>
</dbReference>
<dbReference type="Pfam" id="PF07977">
    <property type="entry name" value="FabA"/>
    <property type="match status" value="1"/>
</dbReference>
<dbReference type="SUPFAM" id="SSF54637">
    <property type="entry name" value="Thioesterase/thiol ester dehydrase-isomerase"/>
    <property type="match status" value="1"/>
</dbReference>
<accession>B4TDZ4</accession>
<feature type="chain" id="PRO_1000201202" description="3-hydroxydecanoyl-[acyl-carrier-protein] dehydratase">
    <location>
        <begin position="1"/>
        <end position="172"/>
    </location>
</feature>
<feature type="active site" evidence="1">
    <location>
        <position position="71"/>
    </location>
</feature>
<keyword id="KW-0963">Cytoplasm</keyword>
<keyword id="KW-0275">Fatty acid biosynthesis</keyword>
<keyword id="KW-0276">Fatty acid metabolism</keyword>
<keyword id="KW-0413">Isomerase</keyword>
<keyword id="KW-0444">Lipid biosynthesis</keyword>
<keyword id="KW-0443">Lipid metabolism</keyword>
<keyword id="KW-0456">Lyase</keyword>
<reference key="1">
    <citation type="journal article" date="2011" name="J. Bacteriol.">
        <title>Comparative genomics of 28 Salmonella enterica isolates: evidence for CRISPR-mediated adaptive sublineage evolution.</title>
        <authorList>
            <person name="Fricke W.F."/>
            <person name="Mammel M.K."/>
            <person name="McDermott P.F."/>
            <person name="Tartera C."/>
            <person name="White D.G."/>
            <person name="Leclerc J.E."/>
            <person name="Ravel J."/>
            <person name="Cebula T.A."/>
        </authorList>
    </citation>
    <scope>NUCLEOTIDE SEQUENCE [LARGE SCALE GENOMIC DNA]</scope>
    <source>
        <strain>SL476</strain>
    </source>
</reference>
<gene>
    <name evidence="1" type="primary">fabA</name>
    <name type="ordered locus">SeHA_C1176</name>
</gene>
<comment type="function">
    <text evidence="1">Necessary for the introduction of cis unsaturation into fatty acids. Catalyzes the dehydration of (3R)-3-hydroxydecanoyl-ACP to E-(2)-decenoyl-ACP and then its isomerization to Z-(3)-decenoyl-ACP. Can catalyze the dehydratase reaction for beta-hydroxyacyl-ACPs with saturated chain lengths up to 16:0, being most active on intermediate chain length.</text>
</comment>
<comment type="catalytic activity">
    <reaction evidence="1">
        <text>a (3R)-hydroxyacyl-[ACP] = a (2E)-enoyl-[ACP] + H2O</text>
        <dbReference type="Rhea" id="RHEA:13097"/>
        <dbReference type="Rhea" id="RHEA-COMP:9925"/>
        <dbReference type="Rhea" id="RHEA-COMP:9945"/>
        <dbReference type="ChEBI" id="CHEBI:15377"/>
        <dbReference type="ChEBI" id="CHEBI:78784"/>
        <dbReference type="ChEBI" id="CHEBI:78827"/>
        <dbReference type="EC" id="4.2.1.59"/>
    </reaction>
</comment>
<comment type="catalytic activity">
    <reaction evidence="1">
        <text>(3R)-hydroxydecanoyl-[ACP] = (2E)-decenoyl-[ACP] + H2O</text>
        <dbReference type="Rhea" id="RHEA:41860"/>
        <dbReference type="Rhea" id="RHEA-COMP:9638"/>
        <dbReference type="Rhea" id="RHEA-COMP:9639"/>
        <dbReference type="ChEBI" id="CHEBI:15377"/>
        <dbReference type="ChEBI" id="CHEBI:78466"/>
        <dbReference type="ChEBI" id="CHEBI:78467"/>
    </reaction>
</comment>
<comment type="catalytic activity">
    <reaction evidence="1">
        <text>(2E)-decenoyl-[ACP] = (3Z)-decenoyl-[ACP]</text>
        <dbReference type="Rhea" id="RHEA:23568"/>
        <dbReference type="Rhea" id="RHEA-COMP:9639"/>
        <dbReference type="Rhea" id="RHEA-COMP:9927"/>
        <dbReference type="ChEBI" id="CHEBI:78467"/>
        <dbReference type="ChEBI" id="CHEBI:78798"/>
        <dbReference type="EC" id="5.3.3.14"/>
    </reaction>
</comment>
<comment type="pathway">
    <text evidence="1">Lipid metabolism; fatty acid biosynthesis.</text>
</comment>
<comment type="subunit">
    <text evidence="1">Homodimer.</text>
</comment>
<comment type="subcellular location">
    <subcellularLocation>
        <location evidence="1">Cytoplasm</location>
    </subcellularLocation>
</comment>
<comment type="similarity">
    <text evidence="1">Belongs to the thioester dehydratase family. FabA subfamily.</text>
</comment>
<protein>
    <recommendedName>
        <fullName evidence="1">3-hydroxydecanoyl-[acyl-carrier-protein] dehydratase</fullName>
        <ecNumber evidence="1">4.2.1.59</ecNumber>
    </recommendedName>
    <alternativeName>
        <fullName evidence="1">3-hydroxyacyl-[acyl-carrier-protein] dehydratase FabA</fullName>
    </alternativeName>
    <alternativeName>
        <fullName evidence="1">Beta-hydroxydecanoyl thioester dehydrase</fullName>
    </alternativeName>
    <alternativeName>
        <fullName evidence="1">Trans-2-decenoyl-[acyl-carrier-protein] isomerase</fullName>
        <ecNumber evidence="1">5.3.3.14</ecNumber>
    </alternativeName>
</protein>
<organism>
    <name type="scientific">Salmonella heidelberg (strain SL476)</name>
    <dbReference type="NCBI Taxonomy" id="454169"/>
    <lineage>
        <taxon>Bacteria</taxon>
        <taxon>Pseudomonadati</taxon>
        <taxon>Pseudomonadota</taxon>
        <taxon>Gammaproteobacteria</taxon>
        <taxon>Enterobacterales</taxon>
        <taxon>Enterobacteriaceae</taxon>
        <taxon>Salmonella</taxon>
    </lineage>
</organism>
<proteinExistence type="inferred from homology"/>
<evidence type="ECO:0000255" key="1">
    <source>
        <dbReference type="HAMAP-Rule" id="MF_00405"/>
    </source>
</evidence>